<name>CARA_SYNC1</name>
<keyword id="KW-0028">Amino-acid biosynthesis</keyword>
<keyword id="KW-0055">Arginine biosynthesis</keyword>
<keyword id="KW-0067">ATP-binding</keyword>
<keyword id="KW-0315">Glutamine amidotransferase</keyword>
<keyword id="KW-0436">Ligase</keyword>
<keyword id="KW-0547">Nucleotide-binding</keyword>
<keyword id="KW-0665">Pyrimidine biosynthesis</keyword>
<keyword id="KW-1185">Reference proteome</keyword>
<accession>Q3A450</accession>
<proteinExistence type="inferred from homology"/>
<evidence type="ECO:0000255" key="1">
    <source>
        <dbReference type="HAMAP-Rule" id="MF_01209"/>
    </source>
</evidence>
<sequence length="376" mass="41312">MKAILALADGRVFTGKAFGARGEVTGEVVFNTSMTGYQEILTDPSYCGEIVTMTYPLIGNYGINPEDVESGRPHLSGFIVKEACPYPSNWRSTTTLDDYLKQNQIVGIQGIDTRALVRHIRDNGAQTGIISSIDLDPESLVEKARKAPSIVGRDLVKEVTCKEPYHWTEGPWDLSEGYQQQTGEPRYKVVAYDFGIKRNILRNLVAIGCDVTVVPATTPAQDVMAMNPDGVFLSNGPGDPEPIQYAQENIRQLLGKMPIFGICLGHQLLALALGGHTYKLKFGHRGGNQPVQRKAEGQVEITSQNHGFAVEGSSIDNTAVLTHINLNDNTIEGLEHCKLPAFSVQYHPEASPGPHDARYLFERFADLMEKNRQSQG</sequence>
<gene>
    <name evidence="1" type="primary">carA</name>
    <name type="ordered locus">Pcar_1613</name>
</gene>
<dbReference type="EC" id="6.3.5.5" evidence="1"/>
<dbReference type="EMBL" id="CP000142">
    <property type="protein sequence ID" value="ABA88857.1"/>
    <property type="molecule type" value="Genomic_DNA"/>
</dbReference>
<dbReference type="RefSeq" id="WP_011341344.1">
    <property type="nucleotide sequence ID" value="NC_007498.2"/>
</dbReference>
<dbReference type="SMR" id="Q3A450"/>
<dbReference type="STRING" id="338963.Pcar_1613"/>
<dbReference type="KEGG" id="pca:Pcar_1613"/>
<dbReference type="eggNOG" id="COG0505">
    <property type="taxonomic scope" value="Bacteria"/>
</dbReference>
<dbReference type="HOGENOM" id="CLU_035901_2_1_7"/>
<dbReference type="OrthoDB" id="9804328at2"/>
<dbReference type="UniPathway" id="UPA00068">
    <property type="reaction ID" value="UER00171"/>
</dbReference>
<dbReference type="UniPathway" id="UPA00070">
    <property type="reaction ID" value="UER00115"/>
</dbReference>
<dbReference type="Proteomes" id="UP000002534">
    <property type="component" value="Chromosome"/>
</dbReference>
<dbReference type="GO" id="GO:0005524">
    <property type="term" value="F:ATP binding"/>
    <property type="evidence" value="ECO:0007669"/>
    <property type="project" value="UniProtKB-UniRule"/>
</dbReference>
<dbReference type="GO" id="GO:0004088">
    <property type="term" value="F:carbamoyl-phosphate synthase (glutamine-hydrolyzing) activity"/>
    <property type="evidence" value="ECO:0007669"/>
    <property type="project" value="UniProtKB-UniRule"/>
</dbReference>
<dbReference type="GO" id="GO:0004359">
    <property type="term" value="F:glutaminase activity"/>
    <property type="evidence" value="ECO:0007669"/>
    <property type="project" value="RHEA"/>
</dbReference>
<dbReference type="GO" id="GO:0006207">
    <property type="term" value="P:'de novo' pyrimidine nucleobase biosynthetic process"/>
    <property type="evidence" value="ECO:0007669"/>
    <property type="project" value="InterPro"/>
</dbReference>
<dbReference type="GO" id="GO:0044205">
    <property type="term" value="P:'de novo' UMP biosynthetic process"/>
    <property type="evidence" value="ECO:0007669"/>
    <property type="project" value="UniProtKB-UniRule"/>
</dbReference>
<dbReference type="GO" id="GO:0006541">
    <property type="term" value="P:glutamine metabolic process"/>
    <property type="evidence" value="ECO:0007669"/>
    <property type="project" value="InterPro"/>
</dbReference>
<dbReference type="GO" id="GO:0006526">
    <property type="term" value="P:L-arginine biosynthetic process"/>
    <property type="evidence" value="ECO:0007669"/>
    <property type="project" value="UniProtKB-UniRule"/>
</dbReference>
<dbReference type="CDD" id="cd01744">
    <property type="entry name" value="GATase1_CPSase"/>
    <property type="match status" value="1"/>
</dbReference>
<dbReference type="FunFam" id="3.40.50.880:FF:000029">
    <property type="entry name" value="Carbamoyl-phosphate synthase small chain"/>
    <property type="match status" value="1"/>
</dbReference>
<dbReference type="FunFam" id="3.50.30.20:FF:000001">
    <property type="entry name" value="Carbamoyl-phosphate synthase small chain"/>
    <property type="match status" value="1"/>
</dbReference>
<dbReference type="Gene3D" id="3.40.50.880">
    <property type="match status" value="1"/>
</dbReference>
<dbReference type="Gene3D" id="3.50.30.20">
    <property type="entry name" value="Carbamoyl-phosphate synthase small subunit, N-terminal domain"/>
    <property type="match status" value="1"/>
</dbReference>
<dbReference type="HAMAP" id="MF_01209">
    <property type="entry name" value="CPSase_S_chain"/>
    <property type="match status" value="1"/>
</dbReference>
<dbReference type="InterPro" id="IPR050472">
    <property type="entry name" value="Anth_synth/Amidotransfase"/>
</dbReference>
<dbReference type="InterPro" id="IPR006274">
    <property type="entry name" value="CarbamoylP_synth_ssu"/>
</dbReference>
<dbReference type="InterPro" id="IPR002474">
    <property type="entry name" value="CarbamoylP_synth_ssu_N"/>
</dbReference>
<dbReference type="InterPro" id="IPR036480">
    <property type="entry name" value="CarbP_synth_ssu_N_sf"/>
</dbReference>
<dbReference type="InterPro" id="IPR029062">
    <property type="entry name" value="Class_I_gatase-like"/>
</dbReference>
<dbReference type="InterPro" id="IPR035686">
    <property type="entry name" value="CPSase_GATase1"/>
</dbReference>
<dbReference type="InterPro" id="IPR017926">
    <property type="entry name" value="GATASE"/>
</dbReference>
<dbReference type="NCBIfam" id="TIGR01368">
    <property type="entry name" value="CPSaseIIsmall"/>
    <property type="match status" value="1"/>
</dbReference>
<dbReference type="NCBIfam" id="NF009475">
    <property type="entry name" value="PRK12838.1"/>
    <property type="match status" value="1"/>
</dbReference>
<dbReference type="PANTHER" id="PTHR43418:SF7">
    <property type="entry name" value="CARBAMOYL-PHOSPHATE SYNTHASE SMALL CHAIN"/>
    <property type="match status" value="1"/>
</dbReference>
<dbReference type="PANTHER" id="PTHR43418">
    <property type="entry name" value="MULTIFUNCTIONAL TRYPTOPHAN BIOSYNTHESIS PROTEIN-RELATED"/>
    <property type="match status" value="1"/>
</dbReference>
<dbReference type="Pfam" id="PF00988">
    <property type="entry name" value="CPSase_sm_chain"/>
    <property type="match status" value="1"/>
</dbReference>
<dbReference type="Pfam" id="PF00117">
    <property type="entry name" value="GATase"/>
    <property type="match status" value="1"/>
</dbReference>
<dbReference type="PRINTS" id="PR00097">
    <property type="entry name" value="ANTSNTHASEII"/>
</dbReference>
<dbReference type="PRINTS" id="PR00099">
    <property type="entry name" value="CPSGATASE"/>
</dbReference>
<dbReference type="PRINTS" id="PR00096">
    <property type="entry name" value="GATASE"/>
</dbReference>
<dbReference type="SMART" id="SM01097">
    <property type="entry name" value="CPSase_sm_chain"/>
    <property type="match status" value="1"/>
</dbReference>
<dbReference type="SUPFAM" id="SSF52021">
    <property type="entry name" value="Carbamoyl phosphate synthetase, small subunit N-terminal domain"/>
    <property type="match status" value="1"/>
</dbReference>
<dbReference type="SUPFAM" id="SSF52317">
    <property type="entry name" value="Class I glutamine amidotransferase-like"/>
    <property type="match status" value="1"/>
</dbReference>
<dbReference type="PROSITE" id="PS51273">
    <property type="entry name" value="GATASE_TYPE_1"/>
    <property type="match status" value="1"/>
</dbReference>
<reference key="1">
    <citation type="submission" date="2005-10" db="EMBL/GenBank/DDBJ databases">
        <title>Complete sequence of Pelobacter carbinolicus DSM 2380.</title>
        <authorList>
            <person name="Copeland A."/>
            <person name="Lucas S."/>
            <person name="Lapidus A."/>
            <person name="Barry K."/>
            <person name="Detter J.C."/>
            <person name="Glavina T."/>
            <person name="Hammon N."/>
            <person name="Israni S."/>
            <person name="Pitluck S."/>
            <person name="Chertkov O."/>
            <person name="Schmutz J."/>
            <person name="Larimer F."/>
            <person name="Land M."/>
            <person name="Kyrpides N."/>
            <person name="Ivanova N."/>
            <person name="Richardson P."/>
        </authorList>
    </citation>
    <scope>NUCLEOTIDE SEQUENCE [LARGE SCALE GENOMIC DNA]</scope>
    <source>
        <strain>DSM 2380 / NBRC 103641 / GraBd1</strain>
    </source>
</reference>
<organism>
    <name type="scientific">Syntrophotalea carbinolica (strain DSM 2380 / NBRC 103641 / GraBd1)</name>
    <name type="common">Pelobacter carbinolicus</name>
    <dbReference type="NCBI Taxonomy" id="338963"/>
    <lineage>
        <taxon>Bacteria</taxon>
        <taxon>Pseudomonadati</taxon>
        <taxon>Thermodesulfobacteriota</taxon>
        <taxon>Desulfuromonadia</taxon>
        <taxon>Desulfuromonadales</taxon>
        <taxon>Syntrophotaleaceae</taxon>
        <taxon>Syntrophotalea</taxon>
    </lineage>
</organism>
<comment type="function">
    <text evidence="1">Small subunit of the glutamine-dependent carbamoyl phosphate synthetase (CPSase). CPSase catalyzes the formation of carbamoyl phosphate from the ammonia moiety of glutamine, carbonate, and phosphate donated by ATP, constituting the first step of 2 biosynthetic pathways, one leading to arginine and/or urea and the other to pyrimidine nucleotides. The small subunit (glutamine amidotransferase) binds and cleaves glutamine to supply the large subunit with the substrate ammonia.</text>
</comment>
<comment type="catalytic activity">
    <reaction evidence="1">
        <text>hydrogencarbonate + L-glutamine + 2 ATP + H2O = carbamoyl phosphate + L-glutamate + 2 ADP + phosphate + 2 H(+)</text>
        <dbReference type="Rhea" id="RHEA:18633"/>
        <dbReference type="ChEBI" id="CHEBI:15377"/>
        <dbReference type="ChEBI" id="CHEBI:15378"/>
        <dbReference type="ChEBI" id="CHEBI:17544"/>
        <dbReference type="ChEBI" id="CHEBI:29985"/>
        <dbReference type="ChEBI" id="CHEBI:30616"/>
        <dbReference type="ChEBI" id="CHEBI:43474"/>
        <dbReference type="ChEBI" id="CHEBI:58228"/>
        <dbReference type="ChEBI" id="CHEBI:58359"/>
        <dbReference type="ChEBI" id="CHEBI:456216"/>
        <dbReference type="EC" id="6.3.5.5"/>
    </reaction>
</comment>
<comment type="catalytic activity">
    <molecule>Carbamoyl phosphate synthase small chain</molecule>
    <reaction evidence="1">
        <text>L-glutamine + H2O = L-glutamate + NH4(+)</text>
        <dbReference type="Rhea" id="RHEA:15889"/>
        <dbReference type="ChEBI" id="CHEBI:15377"/>
        <dbReference type="ChEBI" id="CHEBI:28938"/>
        <dbReference type="ChEBI" id="CHEBI:29985"/>
        <dbReference type="ChEBI" id="CHEBI:58359"/>
    </reaction>
</comment>
<comment type="pathway">
    <text evidence="1">Amino-acid biosynthesis; L-arginine biosynthesis; carbamoyl phosphate from bicarbonate: step 1/1.</text>
</comment>
<comment type="pathway">
    <text evidence="1">Pyrimidine metabolism; UMP biosynthesis via de novo pathway; (S)-dihydroorotate from bicarbonate: step 1/3.</text>
</comment>
<comment type="subunit">
    <text evidence="1">Composed of two chains; the small (or glutamine) chain promotes the hydrolysis of glutamine to ammonia, which is used by the large (or ammonia) chain to synthesize carbamoyl phosphate. Tetramer of heterodimers (alpha,beta)4.</text>
</comment>
<comment type="similarity">
    <text evidence="1">Belongs to the CarA family.</text>
</comment>
<feature type="chain" id="PRO_1000138874" description="Carbamoyl phosphate synthase small chain">
    <location>
        <begin position="1"/>
        <end position="376"/>
    </location>
</feature>
<feature type="domain" description="Glutamine amidotransferase type-1" evidence="1">
    <location>
        <begin position="188"/>
        <end position="374"/>
    </location>
</feature>
<feature type="region of interest" description="CPSase" evidence="1">
    <location>
        <begin position="1"/>
        <end position="184"/>
    </location>
</feature>
<feature type="active site" description="Nucleophile" evidence="1">
    <location>
        <position position="263"/>
    </location>
</feature>
<feature type="active site" evidence="1">
    <location>
        <position position="347"/>
    </location>
</feature>
<feature type="active site" evidence="1">
    <location>
        <position position="349"/>
    </location>
</feature>
<feature type="binding site" evidence="1">
    <location>
        <position position="45"/>
    </location>
    <ligand>
        <name>L-glutamine</name>
        <dbReference type="ChEBI" id="CHEBI:58359"/>
    </ligand>
</feature>
<feature type="binding site" evidence="1">
    <location>
        <position position="236"/>
    </location>
    <ligand>
        <name>L-glutamine</name>
        <dbReference type="ChEBI" id="CHEBI:58359"/>
    </ligand>
</feature>
<feature type="binding site" evidence="1">
    <location>
        <position position="238"/>
    </location>
    <ligand>
        <name>L-glutamine</name>
        <dbReference type="ChEBI" id="CHEBI:58359"/>
    </ligand>
</feature>
<feature type="binding site" evidence="1">
    <location>
        <position position="264"/>
    </location>
    <ligand>
        <name>L-glutamine</name>
        <dbReference type="ChEBI" id="CHEBI:58359"/>
    </ligand>
</feature>
<feature type="binding site" evidence="1">
    <location>
        <position position="267"/>
    </location>
    <ligand>
        <name>L-glutamine</name>
        <dbReference type="ChEBI" id="CHEBI:58359"/>
    </ligand>
</feature>
<feature type="binding site" evidence="1">
    <location>
        <position position="305"/>
    </location>
    <ligand>
        <name>L-glutamine</name>
        <dbReference type="ChEBI" id="CHEBI:58359"/>
    </ligand>
</feature>
<feature type="binding site" evidence="1">
    <location>
        <position position="307"/>
    </location>
    <ligand>
        <name>L-glutamine</name>
        <dbReference type="ChEBI" id="CHEBI:58359"/>
    </ligand>
</feature>
<feature type="binding site" evidence="1">
    <location>
        <position position="308"/>
    </location>
    <ligand>
        <name>L-glutamine</name>
        <dbReference type="ChEBI" id="CHEBI:58359"/>
    </ligand>
</feature>
<protein>
    <recommendedName>
        <fullName evidence="1">Carbamoyl phosphate synthase small chain</fullName>
        <ecNumber evidence="1">6.3.5.5</ecNumber>
    </recommendedName>
    <alternativeName>
        <fullName evidence="1">Carbamoyl phosphate synthetase glutamine chain</fullName>
    </alternativeName>
</protein>